<accession>Q74JW3</accession>
<comment type="function">
    <text evidence="1">A non-essential component of RNA polymerase (RNAP).</text>
</comment>
<comment type="catalytic activity">
    <reaction evidence="1">
        <text>RNA(n) + a ribonucleoside 5'-triphosphate = RNA(n+1) + diphosphate</text>
        <dbReference type="Rhea" id="RHEA:21248"/>
        <dbReference type="Rhea" id="RHEA-COMP:14527"/>
        <dbReference type="Rhea" id="RHEA-COMP:17342"/>
        <dbReference type="ChEBI" id="CHEBI:33019"/>
        <dbReference type="ChEBI" id="CHEBI:61557"/>
        <dbReference type="ChEBI" id="CHEBI:140395"/>
        <dbReference type="EC" id="2.7.7.6"/>
    </reaction>
</comment>
<comment type="subunit">
    <text evidence="1">RNAP is composed of a core of 2 alpha, a beta and a beta' subunit. The core is associated with a delta subunit, and at least one of epsilon or omega. When a sigma factor is associated with the core the holoenzyme is formed, which can initiate transcription.</text>
</comment>
<comment type="similarity">
    <text evidence="1">Belongs to the RNA polymerase subunit epsilon family.</text>
</comment>
<proteinExistence type="inferred from homology"/>
<name>RPOY_LACJO</name>
<gene>
    <name evidence="1" type="primary">rpoY</name>
    <name type="ordered locus">LJ_0992</name>
</gene>
<organism>
    <name type="scientific">Lactobacillus johnsonii (strain CNCM I-12250 / La1 / NCC 533)</name>
    <dbReference type="NCBI Taxonomy" id="257314"/>
    <lineage>
        <taxon>Bacteria</taxon>
        <taxon>Bacillati</taxon>
        <taxon>Bacillota</taxon>
        <taxon>Bacilli</taxon>
        <taxon>Lactobacillales</taxon>
        <taxon>Lactobacillaceae</taxon>
        <taxon>Lactobacillus</taxon>
    </lineage>
</organism>
<dbReference type="EC" id="2.7.7.6" evidence="1"/>
<dbReference type="EMBL" id="AE017198">
    <property type="protein sequence ID" value="AAS08814.1"/>
    <property type="molecule type" value="Genomic_DNA"/>
</dbReference>
<dbReference type="RefSeq" id="WP_004894289.1">
    <property type="nucleotide sequence ID" value="NC_005362.1"/>
</dbReference>
<dbReference type="SMR" id="Q74JW3"/>
<dbReference type="KEGG" id="ljo:LJ_0992"/>
<dbReference type="eggNOG" id="COG5503">
    <property type="taxonomic scope" value="Bacteria"/>
</dbReference>
<dbReference type="HOGENOM" id="CLU_187518_0_0_9"/>
<dbReference type="Proteomes" id="UP000000581">
    <property type="component" value="Chromosome"/>
</dbReference>
<dbReference type="GO" id="GO:0000428">
    <property type="term" value="C:DNA-directed RNA polymerase complex"/>
    <property type="evidence" value="ECO:0007669"/>
    <property type="project" value="UniProtKB-KW"/>
</dbReference>
<dbReference type="GO" id="GO:0003677">
    <property type="term" value="F:DNA binding"/>
    <property type="evidence" value="ECO:0007669"/>
    <property type="project" value="UniProtKB-UniRule"/>
</dbReference>
<dbReference type="GO" id="GO:0003899">
    <property type="term" value="F:DNA-directed RNA polymerase activity"/>
    <property type="evidence" value="ECO:0007669"/>
    <property type="project" value="UniProtKB-UniRule"/>
</dbReference>
<dbReference type="GO" id="GO:0006351">
    <property type="term" value="P:DNA-templated transcription"/>
    <property type="evidence" value="ECO:0007669"/>
    <property type="project" value="UniProtKB-UniRule"/>
</dbReference>
<dbReference type="Gene3D" id="3.10.20.730">
    <property type="entry name" value="RNAP, epsilon subunit-like"/>
    <property type="match status" value="1"/>
</dbReference>
<dbReference type="HAMAP" id="MF_01553">
    <property type="entry name" value="RNApol_bact_RpoY"/>
    <property type="match status" value="1"/>
</dbReference>
<dbReference type="InterPro" id="IPR009907">
    <property type="entry name" value="RpoY"/>
</dbReference>
<dbReference type="NCBIfam" id="NF010188">
    <property type="entry name" value="PRK13667.1"/>
    <property type="match status" value="1"/>
</dbReference>
<dbReference type="Pfam" id="PF07288">
    <property type="entry name" value="RpoY"/>
    <property type="match status" value="1"/>
</dbReference>
<protein>
    <recommendedName>
        <fullName evidence="1">DNA-directed RNA polymerase subunit epsilon</fullName>
        <shortName evidence="1">RNAP epsilon subunit</shortName>
        <ecNumber evidence="1">2.7.7.6</ecNumber>
    </recommendedName>
    <alternativeName>
        <fullName evidence="1">RNA polymerase epsilon subunit</fullName>
    </alternativeName>
    <alternativeName>
        <fullName evidence="1">Transcriptase subunit epsilon</fullName>
    </alternativeName>
</protein>
<keyword id="KW-0240">DNA-directed RNA polymerase</keyword>
<keyword id="KW-0548">Nucleotidyltransferase</keyword>
<keyword id="KW-0804">Transcription</keyword>
<keyword id="KW-0808">Transferase</keyword>
<sequence>MIYKVLYQKDQIVNPRRETTKTLFLEADNVVAARTMVEDNTPYNIELIQELTGNSLAYEKQSPDFKLTTFDSKDN</sequence>
<feature type="chain" id="PRO_0000163126" description="DNA-directed RNA polymerase subunit epsilon">
    <location>
        <begin position="1"/>
        <end position="75"/>
    </location>
</feature>
<evidence type="ECO:0000255" key="1">
    <source>
        <dbReference type="HAMAP-Rule" id="MF_01553"/>
    </source>
</evidence>
<reference key="1">
    <citation type="journal article" date="2004" name="Proc. Natl. Acad. Sci. U.S.A.">
        <title>The genome sequence of the probiotic intestinal bacterium Lactobacillus johnsonii NCC 533.</title>
        <authorList>
            <person name="Pridmore R.D."/>
            <person name="Berger B."/>
            <person name="Desiere F."/>
            <person name="Vilanova D."/>
            <person name="Barretto C."/>
            <person name="Pittet A.-C."/>
            <person name="Zwahlen M.-C."/>
            <person name="Rouvet M."/>
            <person name="Altermann E."/>
            <person name="Barrangou R."/>
            <person name="Mollet B."/>
            <person name="Mercenier A."/>
            <person name="Klaenhammer T."/>
            <person name="Arigoni F."/>
            <person name="Schell M.A."/>
        </authorList>
    </citation>
    <scope>NUCLEOTIDE SEQUENCE [LARGE SCALE GENOMIC DNA]</scope>
    <source>
        <strain>CNCM I-1225 / La1 / NCC 533</strain>
    </source>
</reference>